<feature type="chain" id="PRO_0000108855" description="Phospho-N-acetylmuramoyl-pentapeptide-transferase">
    <location>
        <begin position="1"/>
        <end position="359"/>
    </location>
</feature>
<feature type="transmembrane region" description="Helical" evidence="1">
    <location>
        <begin position="3"/>
        <end position="23"/>
    </location>
</feature>
<feature type="transmembrane region" description="Helical" evidence="1">
    <location>
        <begin position="55"/>
        <end position="75"/>
    </location>
</feature>
<feature type="transmembrane region" description="Helical" evidence="1">
    <location>
        <begin position="80"/>
        <end position="100"/>
    </location>
</feature>
<feature type="transmembrane region" description="Helical" evidence="1">
    <location>
        <begin position="117"/>
        <end position="137"/>
    </location>
</feature>
<feature type="transmembrane region" description="Helical" evidence="1">
    <location>
        <begin position="156"/>
        <end position="176"/>
    </location>
</feature>
<feature type="transmembrane region" description="Helical" evidence="1">
    <location>
        <begin position="187"/>
        <end position="207"/>
    </location>
</feature>
<feature type="transmembrane region" description="Helical" evidence="1">
    <location>
        <begin position="231"/>
        <end position="251"/>
    </location>
</feature>
<feature type="transmembrane region" description="Helical" evidence="1">
    <location>
        <begin position="255"/>
        <end position="275"/>
    </location>
</feature>
<feature type="transmembrane region" description="Helical" evidence="1">
    <location>
        <begin position="280"/>
        <end position="300"/>
    </location>
</feature>
<feature type="transmembrane region" description="Helical" evidence="1">
    <location>
        <begin position="334"/>
        <end position="354"/>
    </location>
</feature>
<dbReference type="EC" id="2.7.8.13" evidence="1"/>
<dbReference type="EMBL" id="AE016958">
    <property type="protein sequence ID" value="AAS04217.1"/>
    <property type="molecule type" value="Genomic_DNA"/>
</dbReference>
<dbReference type="RefSeq" id="WP_010949404.1">
    <property type="nucleotide sequence ID" value="NZ_CP106873.1"/>
</dbReference>
<dbReference type="SMR" id="Q73YQ5"/>
<dbReference type="STRING" id="262316.MAP_1900c"/>
<dbReference type="KEGG" id="mpa:MAP_1900c"/>
<dbReference type="PATRIC" id="fig|262316.17.peg.2014"/>
<dbReference type="eggNOG" id="COG0472">
    <property type="taxonomic scope" value="Bacteria"/>
</dbReference>
<dbReference type="HOGENOM" id="CLU_023982_0_1_11"/>
<dbReference type="UniPathway" id="UPA00219"/>
<dbReference type="Proteomes" id="UP000000580">
    <property type="component" value="Chromosome"/>
</dbReference>
<dbReference type="GO" id="GO:0005886">
    <property type="term" value="C:plasma membrane"/>
    <property type="evidence" value="ECO:0007669"/>
    <property type="project" value="UniProtKB-SubCell"/>
</dbReference>
<dbReference type="GO" id="GO:0046872">
    <property type="term" value="F:metal ion binding"/>
    <property type="evidence" value="ECO:0007669"/>
    <property type="project" value="UniProtKB-KW"/>
</dbReference>
<dbReference type="GO" id="GO:0008963">
    <property type="term" value="F:phospho-N-acetylmuramoyl-pentapeptide-transferase activity"/>
    <property type="evidence" value="ECO:0007669"/>
    <property type="project" value="UniProtKB-UniRule"/>
</dbReference>
<dbReference type="GO" id="GO:0051992">
    <property type="term" value="F:UDP-N-acetylmuramoyl-L-alanyl-D-glutamyl-meso-2,6-diaminopimelyl-D-alanyl-D-alanine:undecaprenyl-phosphate transferase activity"/>
    <property type="evidence" value="ECO:0007669"/>
    <property type="project" value="RHEA"/>
</dbReference>
<dbReference type="GO" id="GO:0051301">
    <property type="term" value="P:cell division"/>
    <property type="evidence" value="ECO:0007669"/>
    <property type="project" value="UniProtKB-KW"/>
</dbReference>
<dbReference type="GO" id="GO:0071555">
    <property type="term" value="P:cell wall organization"/>
    <property type="evidence" value="ECO:0007669"/>
    <property type="project" value="UniProtKB-KW"/>
</dbReference>
<dbReference type="GO" id="GO:0009252">
    <property type="term" value="P:peptidoglycan biosynthetic process"/>
    <property type="evidence" value="ECO:0007669"/>
    <property type="project" value="UniProtKB-UniRule"/>
</dbReference>
<dbReference type="GO" id="GO:0008360">
    <property type="term" value="P:regulation of cell shape"/>
    <property type="evidence" value="ECO:0007669"/>
    <property type="project" value="UniProtKB-KW"/>
</dbReference>
<dbReference type="CDD" id="cd06852">
    <property type="entry name" value="GT_MraY"/>
    <property type="match status" value="1"/>
</dbReference>
<dbReference type="HAMAP" id="MF_00038">
    <property type="entry name" value="MraY"/>
    <property type="match status" value="1"/>
</dbReference>
<dbReference type="InterPro" id="IPR000715">
    <property type="entry name" value="Glycosyl_transferase_4"/>
</dbReference>
<dbReference type="InterPro" id="IPR003524">
    <property type="entry name" value="PNAcMuramoyl-5peptid_Trfase"/>
</dbReference>
<dbReference type="InterPro" id="IPR018480">
    <property type="entry name" value="PNAcMuramoyl-5peptid_Trfase_CS"/>
</dbReference>
<dbReference type="NCBIfam" id="TIGR00445">
    <property type="entry name" value="mraY"/>
    <property type="match status" value="1"/>
</dbReference>
<dbReference type="PANTHER" id="PTHR22926">
    <property type="entry name" value="PHOSPHO-N-ACETYLMURAMOYL-PENTAPEPTIDE-TRANSFERASE"/>
    <property type="match status" value="1"/>
</dbReference>
<dbReference type="PANTHER" id="PTHR22926:SF5">
    <property type="entry name" value="PHOSPHO-N-ACETYLMURAMOYL-PENTAPEPTIDE-TRANSFERASE HOMOLOG"/>
    <property type="match status" value="1"/>
</dbReference>
<dbReference type="Pfam" id="PF00953">
    <property type="entry name" value="Glycos_transf_4"/>
    <property type="match status" value="1"/>
</dbReference>
<dbReference type="Pfam" id="PF10555">
    <property type="entry name" value="MraY_sig1"/>
    <property type="match status" value="1"/>
</dbReference>
<dbReference type="PROSITE" id="PS01347">
    <property type="entry name" value="MRAY_1"/>
    <property type="match status" value="1"/>
</dbReference>
<dbReference type="PROSITE" id="PS01348">
    <property type="entry name" value="MRAY_2"/>
    <property type="match status" value="1"/>
</dbReference>
<reference key="1">
    <citation type="journal article" date="2005" name="Proc. Natl. Acad. Sci. U.S.A.">
        <title>The complete genome sequence of Mycobacterium avium subspecies paratuberculosis.</title>
        <authorList>
            <person name="Li L."/>
            <person name="Bannantine J.P."/>
            <person name="Zhang Q."/>
            <person name="Amonsin A."/>
            <person name="May B.J."/>
            <person name="Alt D."/>
            <person name="Banerji N."/>
            <person name="Kanjilal S."/>
            <person name="Kapur V."/>
        </authorList>
    </citation>
    <scope>NUCLEOTIDE SEQUENCE [LARGE SCALE GENOMIC DNA]</scope>
    <source>
        <strain>ATCC BAA-968 / K-10</strain>
    </source>
</reference>
<accession>Q73YQ5</accession>
<comment type="function">
    <text evidence="1">Catalyzes the initial step of the lipid cycle reactions in the biosynthesis of the cell wall peptidoglycan: transfers peptidoglycan precursor phospho-MurNAc-pentapeptide from UDP-MurNAc-pentapeptide onto the lipid carrier undecaprenyl phosphate, yielding undecaprenyl-pyrophosphoryl-MurNAc-pentapeptide, known as lipid I.</text>
</comment>
<comment type="catalytic activity">
    <reaction evidence="1">
        <text>UDP-N-acetyl-alpha-D-muramoyl-L-alanyl-gamma-D-glutamyl-meso-2,6-diaminopimeloyl-D-alanyl-D-alanine + di-trans,octa-cis-undecaprenyl phosphate = di-trans,octa-cis-undecaprenyl diphospho-N-acetyl-alpha-D-muramoyl-L-alanyl-D-glutamyl-meso-2,6-diaminopimeloyl-D-alanyl-D-alanine + UMP</text>
        <dbReference type="Rhea" id="RHEA:28386"/>
        <dbReference type="ChEBI" id="CHEBI:57865"/>
        <dbReference type="ChEBI" id="CHEBI:60392"/>
        <dbReference type="ChEBI" id="CHEBI:61386"/>
        <dbReference type="ChEBI" id="CHEBI:61387"/>
        <dbReference type="EC" id="2.7.8.13"/>
    </reaction>
</comment>
<comment type="cofactor">
    <cofactor evidence="1">
        <name>Mg(2+)</name>
        <dbReference type="ChEBI" id="CHEBI:18420"/>
    </cofactor>
</comment>
<comment type="pathway">
    <text evidence="1">Cell wall biogenesis; peptidoglycan biosynthesis.</text>
</comment>
<comment type="subcellular location">
    <subcellularLocation>
        <location evidence="1">Cell membrane</location>
        <topology evidence="1">Multi-pass membrane protein</topology>
    </subcellularLocation>
</comment>
<comment type="similarity">
    <text evidence="1">Belongs to the glycosyltransferase 4 family. MraY subfamily.</text>
</comment>
<gene>
    <name evidence="1" type="primary">mraY</name>
    <name type="ordered locus">MAP_1900c</name>
</gene>
<keyword id="KW-0131">Cell cycle</keyword>
<keyword id="KW-0132">Cell division</keyword>
<keyword id="KW-1003">Cell membrane</keyword>
<keyword id="KW-0133">Cell shape</keyword>
<keyword id="KW-0961">Cell wall biogenesis/degradation</keyword>
<keyword id="KW-0460">Magnesium</keyword>
<keyword id="KW-0472">Membrane</keyword>
<keyword id="KW-0479">Metal-binding</keyword>
<keyword id="KW-0573">Peptidoglycan synthesis</keyword>
<keyword id="KW-1185">Reference proteome</keyword>
<keyword id="KW-0808">Transferase</keyword>
<keyword id="KW-0812">Transmembrane</keyword>
<keyword id="KW-1133">Transmembrane helix</keyword>
<name>MRAY_MYCPA</name>
<proteinExistence type="inferred from homology"/>
<protein>
    <recommendedName>
        <fullName evidence="1">Phospho-N-acetylmuramoyl-pentapeptide-transferase</fullName>
        <ecNumber evidence="1">2.7.8.13</ecNumber>
    </recommendedName>
    <alternativeName>
        <fullName evidence="1">UDP-MurNAc-pentapeptide phosphotransferase</fullName>
    </alternativeName>
</protein>
<evidence type="ECO:0000255" key="1">
    <source>
        <dbReference type="HAMAP-Rule" id="MF_00038"/>
    </source>
</evidence>
<sequence length="359" mass="37606">MRQILIAVAVALTVSILLTPALIRLFTRQGFGHHTREDGPPTHHAKRGTPSMGGVAIIAGIWAGYLGTHLAGLAFDGEGISASGLLVLGLATVLGIVGFLDDLIKIRRSRNLGLNKTAKTIGQVAAAVLFGVLALGFRNANGLTPASADLSYVREIATVTLAPGLFVLFCVVVVSAWSNAVNFTDGLDGLAAGSMAMVTAAYVLITFWQYRNACVTAPGLGCYNVRDPLDLAIVAAATAGACIGFLWWNAAPAKIFMGDTGSLALGGIIAGISVTSRTEILAVVLGSLFVAEVSSVVLQILTFRTTGRRVFRMAPFHHHFELAGWAETTVIIRFWLLTAIACGLGVALFYGEWLAAIGA</sequence>
<organism>
    <name type="scientific">Mycolicibacterium paratuberculosis (strain ATCC BAA-968 / K-10)</name>
    <name type="common">Mycobacterium paratuberculosis</name>
    <dbReference type="NCBI Taxonomy" id="262316"/>
    <lineage>
        <taxon>Bacteria</taxon>
        <taxon>Bacillati</taxon>
        <taxon>Actinomycetota</taxon>
        <taxon>Actinomycetes</taxon>
        <taxon>Mycobacteriales</taxon>
        <taxon>Mycobacteriaceae</taxon>
        <taxon>Mycobacterium</taxon>
        <taxon>Mycobacterium avium complex (MAC)</taxon>
    </lineage>
</organism>